<comment type="function">
    <text evidence="5 7">Dual specificity protein phosphatase involved in the inactivation of MAP kinases. Dephosphorylates MAPK10 bound to ARRB2.</text>
</comment>
<comment type="catalytic activity">
    <reaction evidence="3">
        <text>O-phospho-L-tyrosyl-[protein] + H2O = L-tyrosyl-[protein] + phosphate</text>
        <dbReference type="Rhea" id="RHEA:10684"/>
        <dbReference type="Rhea" id="RHEA-COMP:10136"/>
        <dbReference type="Rhea" id="RHEA-COMP:20101"/>
        <dbReference type="ChEBI" id="CHEBI:15377"/>
        <dbReference type="ChEBI" id="CHEBI:43474"/>
        <dbReference type="ChEBI" id="CHEBI:46858"/>
        <dbReference type="ChEBI" id="CHEBI:61978"/>
        <dbReference type="EC" id="3.1.3.48"/>
    </reaction>
</comment>
<comment type="catalytic activity">
    <reaction>
        <text>O-phospho-L-seryl-[protein] + H2O = L-seryl-[protein] + phosphate</text>
        <dbReference type="Rhea" id="RHEA:20629"/>
        <dbReference type="Rhea" id="RHEA-COMP:9863"/>
        <dbReference type="Rhea" id="RHEA-COMP:11604"/>
        <dbReference type="ChEBI" id="CHEBI:15377"/>
        <dbReference type="ChEBI" id="CHEBI:29999"/>
        <dbReference type="ChEBI" id="CHEBI:43474"/>
        <dbReference type="ChEBI" id="CHEBI:83421"/>
        <dbReference type="EC" id="3.1.3.16"/>
    </reaction>
</comment>
<comment type="catalytic activity">
    <reaction>
        <text>O-phospho-L-threonyl-[protein] + H2O = L-threonyl-[protein] + phosphate</text>
        <dbReference type="Rhea" id="RHEA:47004"/>
        <dbReference type="Rhea" id="RHEA-COMP:11060"/>
        <dbReference type="Rhea" id="RHEA-COMP:11605"/>
        <dbReference type="ChEBI" id="CHEBI:15377"/>
        <dbReference type="ChEBI" id="CHEBI:30013"/>
        <dbReference type="ChEBI" id="CHEBI:43474"/>
        <dbReference type="ChEBI" id="CHEBI:61977"/>
        <dbReference type="EC" id="3.1.3.16"/>
    </reaction>
</comment>
<comment type="subunit">
    <text evidence="7">Interacts with ARRB2.</text>
</comment>
<comment type="interaction">
    <interactant intactId="EBI-3443956">
        <id>Q9BY84</id>
    </interactant>
    <interactant intactId="EBI-73946">
        <id>Q16539</id>
        <label>MAPK14</label>
    </interactant>
    <organismsDiffer>false</organismsDiffer>
    <experiments>3</experiments>
</comment>
<comment type="interaction">
    <interactant intactId="EBI-3443956">
        <id>Q9BY84</id>
    </interactant>
    <interactant intactId="EBI-18121963">
        <id>P45983-4</id>
        <label>MAPK8</label>
    </interactant>
    <organismsDiffer>false</organismsDiffer>
    <experiments>3</experiments>
</comment>
<comment type="interaction">
    <interactant intactId="EBI-3443956">
        <id>Q9BY84</id>
    </interactant>
    <interactant intactId="EBI-713568">
        <id>P45984</id>
        <label>MAPK9</label>
    </interactant>
    <organismsDiffer>false</organismsDiffer>
    <experiments>8</experiments>
</comment>
<comment type="interaction">
    <interactant intactId="EBI-3443956">
        <id>Q9BY84</id>
    </interactant>
    <interactant intactId="EBI-720609">
        <id>O76024</id>
        <label>WFS1</label>
    </interactant>
    <organismsDiffer>false</organismsDiffer>
    <experiments>3</experiments>
</comment>
<comment type="subcellular location">
    <subcellularLocation>
        <location>Cytoplasm</location>
    </subcellularLocation>
    <subcellularLocation>
        <location>Nucleus</location>
    </subcellularLocation>
    <subcellularLocation>
        <location>Cytoplasmic vesicle</location>
    </subcellularLocation>
    <text>After dissociation upon AGTR stimulation, re-associates with ARRB2 on endocytic vesicles.</text>
</comment>
<comment type="alternative products">
    <event type="alternative splicing"/>
    <isoform>
        <id>Q9BY84-1</id>
        <name>1</name>
        <sequence type="displayed"/>
    </isoform>
    <isoform>
        <id>Q9BY84-2</id>
        <name>2</name>
        <sequence type="described" ref="VSP_056981 VSP_056982"/>
    </isoform>
</comment>
<comment type="PTM">
    <text evidence="6">Phosphorylated at Ser-446 by MAPK1/ERK2, which prevents its degradation, and thereby stabilizes it and blocks JNK MAPK activity.</text>
</comment>
<comment type="PTM">
    <text evidence="8">(Microbial infection) Acetylated at Lys-55 by the M.tuberculosis Eis protein; this leads to the inhibition of JNK-dependent autophagy, phagosome maturation, and ROS (reactive oxygen species) generation for enhanced intracellular survival of M.tuberculosis.</text>
</comment>
<comment type="similarity">
    <text evidence="10">Belongs to the protein-tyrosine phosphatase family. Non-receptor class dual specificity subfamily.</text>
</comment>
<comment type="sequence caution" evidence="10">
    <conflict type="erroneous initiation">
        <sequence resource="EMBL-CDS" id="BAB21791"/>
    </conflict>
</comment>
<gene>
    <name type="primary">DUSP16</name>
    <name type="synonym">KIAA1700</name>
    <name type="synonym">MKP7</name>
</gene>
<reference key="1">
    <citation type="journal article" date="2001" name="J. Biol. Chem.">
        <title>MKP-7, a novel mitogen-activated protein kinase phosphatase, functions as a shuttle protein.</title>
        <authorList>
            <person name="Masuda K."/>
            <person name="Shima H."/>
            <person name="Watanabe M."/>
            <person name="Kikuchi K."/>
        </authorList>
    </citation>
    <scope>NUCLEOTIDE SEQUENCE [MRNA] (ISOFORM 1)</scope>
    <scope>FUNCTION</scope>
    <scope>SUBCELLULAR LOCATION</scope>
</reference>
<reference key="2">
    <citation type="journal article" date="2003" name="Oncogene">
        <title>MAPK phosphatase DUSP16/MKP-7, a candidate tumor suppressor for chromosome region 12p12-13, reduces BCR-ABL-induced transformation.</title>
        <authorList>
            <person name="Hoornaert I."/>
            <person name="Marynen P."/>
            <person name="Goris J."/>
            <person name="Sciot R."/>
            <person name="Baens M."/>
        </authorList>
    </citation>
    <scope>NUCLEOTIDE SEQUENCE [MRNA] (ISOFORM 1)</scope>
    <source>
        <tissue>Bone marrow</tissue>
    </source>
</reference>
<reference key="3">
    <citation type="submission" date="2001-06" db="EMBL/GenBank/DDBJ databases">
        <title>A detailed transcriptional map of the chromosome 12p12 tumor suppressor locus.</title>
        <authorList>
            <person name="Montpetit A."/>
            <person name="Boily G."/>
            <person name="Sinnett D."/>
        </authorList>
    </citation>
    <scope>NUCLEOTIDE SEQUENCE [MRNA] (ISOFORM 2)</scope>
</reference>
<reference key="4">
    <citation type="journal article" date="2000" name="DNA Res.">
        <title>Prediction of the coding sequences of unidentified human genes. XIX. The complete sequences of 100 new cDNA clones from brain which code for large proteins in vitro.</title>
        <authorList>
            <person name="Nagase T."/>
            <person name="Kikuno R."/>
            <person name="Hattori A."/>
            <person name="Kondo Y."/>
            <person name="Okumura K."/>
            <person name="Ohara O."/>
        </authorList>
    </citation>
    <scope>NUCLEOTIDE SEQUENCE [LARGE SCALE MRNA] (ISOFORM 1)</scope>
    <source>
        <tissue>Brain</tissue>
    </source>
</reference>
<reference key="5">
    <citation type="journal article" date="2006" name="Nature">
        <title>The finished DNA sequence of human chromosome 12.</title>
        <authorList>
            <person name="Scherer S.E."/>
            <person name="Muzny D.M."/>
            <person name="Buhay C.J."/>
            <person name="Chen R."/>
            <person name="Cree A."/>
            <person name="Ding Y."/>
            <person name="Dugan-Rocha S."/>
            <person name="Gill R."/>
            <person name="Gunaratne P."/>
            <person name="Harris R.A."/>
            <person name="Hawes A.C."/>
            <person name="Hernandez J."/>
            <person name="Hodgson A.V."/>
            <person name="Hume J."/>
            <person name="Jackson A."/>
            <person name="Khan Z.M."/>
            <person name="Kovar-Smith C."/>
            <person name="Lewis L.R."/>
            <person name="Lozado R.J."/>
            <person name="Metzker M.L."/>
            <person name="Milosavljevic A."/>
            <person name="Miner G.R."/>
            <person name="Montgomery K.T."/>
            <person name="Morgan M.B."/>
            <person name="Nazareth L.V."/>
            <person name="Scott G."/>
            <person name="Sodergren E."/>
            <person name="Song X.-Z."/>
            <person name="Steffen D."/>
            <person name="Lovering R.C."/>
            <person name="Wheeler D.A."/>
            <person name="Worley K.C."/>
            <person name="Yuan Y."/>
            <person name="Zhang Z."/>
            <person name="Adams C.Q."/>
            <person name="Ansari-Lari M.A."/>
            <person name="Ayele M."/>
            <person name="Brown M.J."/>
            <person name="Chen G."/>
            <person name="Chen Z."/>
            <person name="Clerc-Blankenburg K.P."/>
            <person name="Davis C."/>
            <person name="Delgado O."/>
            <person name="Dinh H.H."/>
            <person name="Draper H."/>
            <person name="Gonzalez-Garay M.L."/>
            <person name="Havlak P."/>
            <person name="Jackson L.R."/>
            <person name="Jacob L.S."/>
            <person name="Kelly S.H."/>
            <person name="Li L."/>
            <person name="Li Z."/>
            <person name="Liu J."/>
            <person name="Liu W."/>
            <person name="Lu J."/>
            <person name="Maheshwari M."/>
            <person name="Nguyen B.-V."/>
            <person name="Okwuonu G.O."/>
            <person name="Pasternak S."/>
            <person name="Perez L.M."/>
            <person name="Plopper F.J.H."/>
            <person name="Santibanez J."/>
            <person name="Shen H."/>
            <person name="Tabor P.E."/>
            <person name="Verduzco D."/>
            <person name="Waldron L."/>
            <person name="Wang Q."/>
            <person name="Williams G.A."/>
            <person name="Zhang J."/>
            <person name="Zhou J."/>
            <person name="Allen C.C."/>
            <person name="Amin A.G."/>
            <person name="Anyalebechi V."/>
            <person name="Bailey M."/>
            <person name="Barbaria J.A."/>
            <person name="Bimage K.E."/>
            <person name="Bryant N.P."/>
            <person name="Burch P.E."/>
            <person name="Burkett C.E."/>
            <person name="Burrell K.L."/>
            <person name="Calderon E."/>
            <person name="Cardenas V."/>
            <person name="Carter K."/>
            <person name="Casias K."/>
            <person name="Cavazos I."/>
            <person name="Cavazos S.R."/>
            <person name="Ceasar H."/>
            <person name="Chacko J."/>
            <person name="Chan S.N."/>
            <person name="Chavez D."/>
            <person name="Christopoulos C."/>
            <person name="Chu J."/>
            <person name="Cockrell R."/>
            <person name="Cox C.D."/>
            <person name="Dang M."/>
            <person name="Dathorne S.R."/>
            <person name="David R."/>
            <person name="Davis C.M."/>
            <person name="Davy-Carroll L."/>
            <person name="Deshazo D.R."/>
            <person name="Donlin J.E."/>
            <person name="D'Souza L."/>
            <person name="Eaves K.A."/>
            <person name="Egan A."/>
            <person name="Emery-Cohen A.J."/>
            <person name="Escotto M."/>
            <person name="Flagg N."/>
            <person name="Forbes L.D."/>
            <person name="Gabisi A.M."/>
            <person name="Garza M."/>
            <person name="Hamilton C."/>
            <person name="Henderson N."/>
            <person name="Hernandez O."/>
            <person name="Hines S."/>
            <person name="Hogues M.E."/>
            <person name="Huang M."/>
            <person name="Idlebird D.G."/>
            <person name="Johnson R."/>
            <person name="Jolivet A."/>
            <person name="Jones S."/>
            <person name="Kagan R."/>
            <person name="King L.M."/>
            <person name="Leal B."/>
            <person name="Lebow H."/>
            <person name="Lee S."/>
            <person name="LeVan J.M."/>
            <person name="Lewis L.C."/>
            <person name="London P."/>
            <person name="Lorensuhewa L.M."/>
            <person name="Loulseged H."/>
            <person name="Lovett D.A."/>
            <person name="Lucier A."/>
            <person name="Lucier R.L."/>
            <person name="Ma J."/>
            <person name="Madu R.C."/>
            <person name="Mapua P."/>
            <person name="Martindale A.D."/>
            <person name="Martinez E."/>
            <person name="Massey E."/>
            <person name="Mawhiney S."/>
            <person name="Meador M.G."/>
            <person name="Mendez S."/>
            <person name="Mercado C."/>
            <person name="Mercado I.C."/>
            <person name="Merritt C.E."/>
            <person name="Miner Z.L."/>
            <person name="Minja E."/>
            <person name="Mitchell T."/>
            <person name="Mohabbat F."/>
            <person name="Mohabbat K."/>
            <person name="Montgomery B."/>
            <person name="Moore N."/>
            <person name="Morris S."/>
            <person name="Munidasa M."/>
            <person name="Ngo R.N."/>
            <person name="Nguyen N.B."/>
            <person name="Nickerson E."/>
            <person name="Nwaokelemeh O.O."/>
            <person name="Nwokenkwo S."/>
            <person name="Obregon M."/>
            <person name="Oguh M."/>
            <person name="Oragunye N."/>
            <person name="Oviedo R.J."/>
            <person name="Parish B.J."/>
            <person name="Parker D.N."/>
            <person name="Parrish J."/>
            <person name="Parks K.L."/>
            <person name="Paul H.A."/>
            <person name="Payton B.A."/>
            <person name="Perez A."/>
            <person name="Perrin W."/>
            <person name="Pickens A."/>
            <person name="Primus E.L."/>
            <person name="Pu L.-L."/>
            <person name="Puazo M."/>
            <person name="Quiles M.M."/>
            <person name="Quiroz J.B."/>
            <person name="Rabata D."/>
            <person name="Reeves K."/>
            <person name="Ruiz S.J."/>
            <person name="Shao H."/>
            <person name="Sisson I."/>
            <person name="Sonaike T."/>
            <person name="Sorelle R.P."/>
            <person name="Sutton A.E."/>
            <person name="Svatek A.F."/>
            <person name="Svetz L.A."/>
            <person name="Tamerisa K.S."/>
            <person name="Taylor T.R."/>
            <person name="Teague B."/>
            <person name="Thomas N."/>
            <person name="Thorn R.D."/>
            <person name="Trejos Z.Y."/>
            <person name="Trevino B.K."/>
            <person name="Ukegbu O.N."/>
            <person name="Urban J.B."/>
            <person name="Vasquez L.I."/>
            <person name="Vera V.A."/>
            <person name="Villasana D.M."/>
            <person name="Wang L."/>
            <person name="Ward-Moore S."/>
            <person name="Warren J.T."/>
            <person name="Wei X."/>
            <person name="White F."/>
            <person name="Williamson A.L."/>
            <person name="Wleczyk R."/>
            <person name="Wooden H.S."/>
            <person name="Wooden S.H."/>
            <person name="Yen J."/>
            <person name="Yoon L."/>
            <person name="Yoon V."/>
            <person name="Zorrilla S.E."/>
            <person name="Nelson D."/>
            <person name="Kucherlapati R."/>
            <person name="Weinstock G."/>
            <person name="Gibbs R.A."/>
        </authorList>
    </citation>
    <scope>NUCLEOTIDE SEQUENCE [LARGE SCALE GENOMIC DNA]</scope>
</reference>
<reference key="6">
    <citation type="journal article" date="2004" name="Genome Res.">
        <title>The status, quality, and expansion of the NIH full-length cDNA project: the Mammalian Gene Collection (MGC).</title>
        <authorList>
            <consortium name="The MGC Project Team"/>
        </authorList>
    </citation>
    <scope>NUCLEOTIDE SEQUENCE [LARGE SCALE MRNA] (ISOFORM 1)</scope>
</reference>
<reference key="7">
    <citation type="journal article" date="2003" name="J. Biol. Chem.">
        <title>Activation of ERK induces phosphorylation of MAPK phosphatase-7, a JNK specific phosphatase, at Ser-446.</title>
        <authorList>
            <person name="Masuda K."/>
            <person name="Shima H."/>
            <person name="Katagiri C."/>
            <person name="Kikuchi K."/>
        </authorList>
    </citation>
    <scope>PHOSPHORYLATION AT SER-446</scope>
</reference>
<reference key="8">
    <citation type="journal article" date="2005" name="J. Biol. Chem.">
        <title>Dynamic interaction between the dual specificity phosphatase MKP7 and the JNK3 scaffold protein beta-arrestin 2.</title>
        <authorList>
            <person name="Willoughby E.A."/>
            <person name="Collins M.K."/>
        </authorList>
    </citation>
    <scope>FUNCTION</scope>
    <scope>SUBCELLULAR LOCATION</scope>
    <scope>INTERACTION WITH ARRB2</scope>
</reference>
<reference key="9">
    <citation type="journal article" date="2008" name="Proc. Natl. Acad. Sci. U.S.A.">
        <title>A quantitative atlas of mitotic phosphorylation.</title>
        <authorList>
            <person name="Dephoure N."/>
            <person name="Zhou C."/>
            <person name="Villen J."/>
            <person name="Beausoleil S.A."/>
            <person name="Bakalarski C.E."/>
            <person name="Elledge S.J."/>
            <person name="Gygi S.P."/>
        </authorList>
    </citation>
    <scope>PHOSPHORYLATION [LARGE SCALE ANALYSIS] AT SER-501</scope>
    <scope>IDENTIFICATION BY MASS SPECTROMETRY [LARGE SCALE ANALYSIS]</scope>
    <source>
        <tissue>Cervix carcinoma</tissue>
    </source>
</reference>
<reference key="10">
    <citation type="journal article" date="2012" name="Proc. Natl. Acad. Sci. U.S.A.">
        <title>Mycobacterium tuberculosis Eis protein initiates suppression of host immune responses by acetylation of DUSP16/MKP-7.</title>
        <authorList>
            <person name="Kim K.H."/>
            <person name="An D.R."/>
            <person name="Song J."/>
            <person name="Yoon J.Y."/>
            <person name="Kim H.S."/>
            <person name="Yoon H.J."/>
            <person name="Im H.N."/>
            <person name="Kim J."/>
            <person name="Kim do J."/>
            <person name="Lee S.J."/>
            <person name="Kim K.H."/>
            <person name="Lee H.M."/>
            <person name="Kim H.J."/>
            <person name="Jo E.K."/>
            <person name="Lee J.Y."/>
            <person name="Suh S.W."/>
        </authorList>
    </citation>
    <scope>ACETYLATION AT LYS-55 BY EIS (MICROBIAL INFECTION)</scope>
</reference>
<reference key="11">
    <citation type="submission" date="2009-06" db="PDB data bank">
        <title>The structure of the rhodanese domain of the human 2 dual specificity phosphatase 16.</title>
        <authorList>
            <consortium name="Structural genomics consortium (SGC)"/>
        </authorList>
    </citation>
    <scope>X-RAY CRYSTALLOGRAPHY (2.2 ANGSTROMS) OF 5-150</scope>
</reference>
<feature type="chain" id="PRO_0000094826" description="Dual specificity protein phosphatase 16">
    <location>
        <begin position="1"/>
        <end position="665"/>
    </location>
</feature>
<feature type="domain" description="Rhodanese" evidence="2">
    <location>
        <begin position="22"/>
        <end position="137"/>
    </location>
</feature>
<feature type="domain" description="Tyrosine-protein phosphatase" evidence="1">
    <location>
        <begin position="158"/>
        <end position="300"/>
    </location>
</feature>
<feature type="region of interest" description="Disordered" evidence="4">
    <location>
        <begin position="321"/>
        <end position="368"/>
    </location>
</feature>
<feature type="region of interest" description="Disordered" evidence="4">
    <location>
        <begin position="449"/>
        <end position="505"/>
    </location>
</feature>
<feature type="region of interest" description="Disordered" evidence="4">
    <location>
        <begin position="597"/>
        <end position="665"/>
    </location>
</feature>
<feature type="compositionally biased region" description="Low complexity" evidence="4">
    <location>
        <begin position="354"/>
        <end position="368"/>
    </location>
</feature>
<feature type="compositionally biased region" description="Polar residues" evidence="4">
    <location>
        <begin position="449"/>
        <end position="458"/>
    </location>
</feature>
<feature type="compositionally biased region" description="Polar residues" evidence="4">
    <location>
        <begin position="487"/>
        <end position="499"/>
    </location>
</feature>
<feature type="compositionally biased region" description="Basic and acidic residues" evidence="4">
    <location>
        <begin position="602"/>
        <end position="622"/>
    </location>
</feature>
<feature type="active site" description="Phosphocysteine intermediate" evidence="1">
    <location>
        <position position="244"/>
    </location>
</feature>
<feature type="modified residue" description="(Microbial infection) N6-acetyllysine; by EIS" evidence="8">
    <location>
        <position position="55"/>
    </location>
</feature>
<feature type="modified residue" description="Phosphoserine; by MAPK1" evidence="6">
    <location>
        <position position="446"/>
    </location>
</feature>
<feature type="modified residue" description="Phosphoserine" evidence="11">
    <location>
        <position position="501"/>
    </location>
</feature>
<feature type="splice variant" id="VSP_056981" description="In isoform 2." evidence="9">
    <original>GFAEFSRCFPGLCEGKSTLV</original>
    <variation>ADAAEWDWLCVKCQQYLSKA</variation>
    <location>
        <begin position="124"/>
        <end position="143"/>
    </location>
</feature>
<feature type="splice variant" id="VSP_056982" description="In isoform 2." evidence="9">
    <location>
        <begin position="144"/>
        <end position="665"/>
    </location>
</feature>
<feature type="sequence variant" id="VAR_051753" description="In dbSNP:rs36049447.">
    <original>T</original>
    <variation>M</variation>
    <location>
        <position position="23"/>
    </location>
</feature>
<feature type="sequence variant" id="VAR_051754" description="In dbSNP:rs3809199.">
    <original>V</original>
    <variation>M</variation>
    <location>
        <position position="366"/>
    </location>
</feature>
<feature type="strand" evidence="12">
    <location>
        <begin position="8"/>
        <end position="10"/>
    </location>
</feature>
<feature type="helix" evidence="12">
    <location>
        <begin position="12"/>
        <end position="19"/>
    </location>
</feature>
<feature type="strand" evidence="13">
    <location>
        <begin position="21"/>
        <end position="24"/>
    </location>
</feature>
<feature type="strand" evidence="12">
    <location>
        <begin position="26"/>
        <end position="30"/>
    </location>
</feature>
<feature type="helix" evidence="12">
    <location>
        <begin position="34"/>
        <end position="39"/>
    </location>
</feature>
<feature type="helix" evidence="12">
    <location>
        <begin position="52"/>
        <end position="59"/>
    </location>
</feature>
<feature type="helix" evidence="12">
    <location>
        <begin position="65"/>
        <end position="71"/>
    </location>
</feature>
<feature type="strand" evidence="12">
    <location>
        <begin position="83"/>
        <end position="88"/>
    </location>
</feature>
<feature type="helix" evidence="12">
    <location>
        <begin position="95"/>
        <end position="97"/>
    </location>
</feature>
<feature type="helix" evidence="12">
    <location>
        <begin position="103"/>
        <end position="114"/>
    </location>
</feature>
<feature type="strand" evidence="12">
    <location>
        <begin position="118"/>
        <end position="121"/>
    </location>
</feature>
<feature type="helix" evidence="12">
    <location>
        <begin position="124"/>
        <end position="131"/>
    </location>
</feature>
<feature type="helix" evidence="12">
    <location>
        <begin position="133"/>
        <end position="135"/>
    </location>
</feature>
<feature type="strand" evidence="14">
    <location>
        <begin position="160"/>
        <end position="163"/>
    </location>
</feature>
<feature type="strand" evidence="14">
    <location>
        <begin position="166"/>
        <end position="170"/>
    </location>
</feature>
<feature type="helix" evidence="14">
    <location>
        <begin position="171"/>
        <end position="175"/>
    </location>
</feature>
<feature type="helix" evidence="14">
    <location>
        <begin position="177"/>
        <end position="183"/>
    </location>
</feature>
<feature type="strand" evidence="14">
    <location>
        <begin position="187"/>
        <end position="190"/>
    </location>
</feature>
<feature type="helix" evidence="14">
    <location>
        <begin position="203"/>
        <end position="205"/>
    </location>
</feature>
<feature type="strand" evidence="14">
    <location>
        <begin position="206"/>
        <end position="208"/>
    </location>
</feature>
<feature type="strand" evidence="14">
    <location>
        <begin position="213"/>
        <end position="216"/>
    </location>
</feature>
<feature type="helix" evidence="14">
    <location>
        <begin position="223"/>
        <end position="235"/>
    </location>
</feature>
<feature type="strand" evidence="14">
    <location>
        <begin position="240"/>
        <end position="249"/>
    </location>
</feature>
<feature type="helix" evidence="14">
    <location>
        <begin position="250"/>
        <end position="262"/>
    </location>
</feature>
<feature type="helix" evidence="14">
    <location>
        <begin position="267"/>
        <end position="277"/>
    </location>
</feature>
<feature type="helix" evidence="14">
    <location>
        <begin position="285"/>
        <end position="297"/>
    </location>
</feature>
<sequence length="665" mass="73102">MAHEMIGTQIVTERLVALLESGTEKVLLIDSRPFVEYNTSHILEAININCSKLMKRRLQQDKVLITELIQHSAKHKVDIDCSQKVVVYDQSSQDVASLSSDCFLTVLLGKLEKSFNSVHLLAGGFAEFSRCFPGLCEGKSTLVPTCISQPCLPVANIGPTRILPNLYLGCQRDVLNKELMQQNGIGYVLNASNTCPKPDFIPESHFLRVPVNDSFCEKILPWLDKSVDFIEKAKASNGCVLVHCLAGISRSATIAIAYIMKRMDMSLDEAYRFVKEKRPTISPNFNFLGQLLDYEKKIKNQTGASGPKSKLKLLHLEKPNEPVPAVSEGGQKSETPLSPPCADSATSEAAGQRPVHPASVPSVPSVQPSLLEDSPLVQALSGLHLSADRLEDSNKLKRSFSLDIKSVSYSASMAASLHGFSSSEDALEYYKPSTTLDGTNKLCQFSPVQELSEQTPETSPDKEEASIPKKLQTARPSDSQSKRLHSVRTSSSGTAQRSLLSPLHRSGSVEDNYHTSFLFGLSTSQQHLTKSAGLGLKGWHSDILAPQTSTPSLTSSWYFATESSHFYSASAIYGGSASYSAYSCSQLPTCGDQVYSVRRRQKPSDRADSRRSWHEESPFEKQFKRRSCQMEFGESIMSENRSREELGKVGSQSSFSGSMEIIEVS</sequence>
<accession>Q9BY84</accession>
<accession>Q547C7</accession>
<accession>Q96QS2</accession>
<accession>Q9C0G3</accession>
<proteinExistence type="evidence at protein level"/>
<organism>
    <name type="scientific">Homo sapiens</name>
    <name type="common">Human</name>
    <dbReference type="NCBI Taxonomy" id="9606"/>
    <lineage>
        <taxon>Eukaryota</taxon>
        <taxon>Metazoa</taxon>
        <taxon>Chordata</taxon>
        <taxon>Craniata</taxon>
        <taxon>Vertebrata</taxon>
        <taxon>Euteleostomi</taxon>
        <taxon>Mammalia</taxon>
        <taxon>Eutheria</taxon>
        <taxon>Euarchontoglires</taxon>
        <taxon>Primates</taxon>
        <taxon>Haplorrhini</taxon>
        <taxon>Catarrhini</taxon>
        <taxon>Hominidae</taxon>
        <taxon>Homo</taxon>
    </lineage>
</organism>
<dbReference type="EC" id="3.1.3.16"/>
<dbReference type="EC" id="3.1.3.48"/>
<dbReference type="EMBL" id="AB052156">
    <property type="protein sequence ID" value="BAB40814.1"/>
    <property type="molecule type" value="mRNA"/>
</dbReference>
<dbReference type="EMBL" id="AF506796">
    <property type="protein sequence ID" value="AAN75120.1"/>
    <property type="molecule type" value="mRNA"/>
</dbReference>
<dbReference type="EMBL" id="AY038927">
    <property type="protein sequence ID" value="AAK69770.1"/>
    <property type="molecule type" value="mRNA"/>
</dbReference>
<dbReference type="EMBL" id="AB051487">
    <property type="protein sequence ID" value="BAB21791.1"/>
    <property type="status" value="ALT_INIT"/>
    <property type="molecule type" value="mRNA"/>
</dbReference>
<dbReference type="EMBL" id="AC007619">
    <property type="status" value="NOT_ANNOTATED_CDS"/>
    <property type="molecule type" value="Genomic_DNA"/>
</dbReference>
<dbReference type="EMBL" id="AC092824">
    <property type="status" value="NOT_ANNOTATED_CDS"/>
    <property type="molecule type" value="Genomic_DNA"/>
</dbReference>
<dbReference type="EMBL" id="BC109235">
    <property type="protein sequence ID" value="AAI09236.1"/>
    <property type="molecule type" value="mRNA"/>
</dbReference>
<dbReference type="CCDS" id="CCDS8650.1">
    <molecule id="Q9BY84-1"/>
</dbReference>
<dbReference type="RefSeq" id="NP_085143.1">
    <molecule id="Q9BY84-1"/>
    <property type="nucleotide sequence ID" value="NM_030640.3"/>
</dbReference>
<dbReference type="RefSeq" id="XP_006719218.1">
    <molecule id="Q9BY84-1"/>
    <property type="nucleotide sequence ID" value="XM_006719155.3"/>
</dbReference>
<dbReference type="RefSeq" id="XP_011519158.1">
    <molecule id="Q9BY84-1"/>
    <property type="nucleotide sequence ID" value="XM_011520856.2"/>
</dbReference>
<dbReference type="RefSeq" id="XP_011519159.1">
    <property type="nucleotide sequence ID" value="XM_011520857.1"/>
</dbReference>
<dbReference type="RefSeq" id="XP_047285524.1">
    <molecule id="Q9BY84-1"/>
    <property type="nucleotide sequence ID" value="XM_047429568.1"/>
</dbReference>
<dbReference type="RefSeq" id="XP_047285525.1">
    <molecule id="Q9BY84-1"/>
    <property type="nucleotide sequence ID" value="XM_047429569.1"/>
</dbReference>
<dbReference type="RefSeq" id="XP_047285526.1">
    <molecule id="Q9BY84-1"/>
    <property type="nucleotide sequence ID" value="XM_047429570.1"/>
</dbReference>
<dbReference type="RefSeq" id="XP_054187675.1">
    <molecule id="Q9BY84-1"/>
    <property type="nucleotide sequence ID" value="XM_054331700.1"/>
</dbReference>
<dbReference type="RefSeq" id="XP_054187676.1">
    <molecule id="Q9BY84-1"/>
    <property type="nucleotide sequence ID" value="XM_054331701.1"/>
</dbReference>
<dbReference type="RefSeq" id="XP_054187677.1">
    <molecule id="Q9BY84-1"/>
    <property type="nucleotide sequence ID" value="XM_054331702.1"/>
</dbReference>
<dbReference type="RefSeq" id="XP_054187678.1">
    <molecule id="Q9BY84-1"/>
    <property type="nucleotide sequence ID" value="XM_054331703.1"/>
</dbReference>
<dbReference type="RefSeq" id="XP_054187679.1">
    <molecule id="Q9BY84-1"/>
    <property type="nucleotide sequence ID" value="XM_054331704.1"/>
</dbReference>
<dbReference type="RefSeq" id="XP_054187680.1">
    <molecule id="Q9BY84-1"/>
    <property type="nucleotide sequence ID" value="XM_054331705.1"/>
</dbReference>
<dbReference type="RefSeq" id="XP_054187681.1">
    <molecule id="Q9BY84-1"/>
    <property type="nucleotide sequence ID" value="XM_054331706.1"/>
</dbReference>
<dbReference type="RefSeq" id="XP_054187682.1">
    <molecule id="Q9BY84-1"/>
    <property type="nucleotide sequence ID" value="XM_054331707.1"/>
</dbReference>
<dbReference type="RefSeq" id="XP_054229273.1">
    <molecule id="Q9BY84-1"/>
    <property type="nucleotide sequence ID" value="XM_054373298.1"/>
</dbReference>
<dbReference type="RefSeq" id="XP_054229274.1">
    <molecule id="Q9BY84-1"/>
    <property type="nucleotide sequence ID" value="XM_054373299.1"/>
</dbReference>
<dbReference type="RefSeq" id="XP_054229275.1">
    <molecule id="Q9BY84-1"/>
    <property type="nucleotide sequence ID" value="XM_054373300.1"/>
</dbReference>
<dbReference type="RefSeq" id="XP_054229276.1">
    <molecule id="Q9BY84-1"/>
    <property type="nucleotide sequence ID" value="XM_054373301.1"/>
</dbReference>
<dbReference type="RefSeq" id="XP_054229277.1">
    <molecule id="Q9BY84-1"/>
    <property type="nucleotide sequence ID" value="XM_054373302.1"/>
</dbReference>
<dbReference type="RefSeq" id="XP_054229278.1">
    <molecule id="Q9BY84-1"/>
    <property type="nucleotide sequence ID" value="XM_054373303.1"/>
</dbReference>
<dbReference type="RefSeq" id="XP_054229279.1">
    <molecule id="Q9BY84-1"/>
    <property type="nucleotide sequence ID" value="XM_054373304.1"/>
</dbReference>
<dbReference type="RefSeq" id="XP_054229280.1">
    <molecule id="Q9BY84-1"/>
    <property type="nucleotide sequence ID" value="XM_054373305.1"/>
</dbReference>
<dbReference type="RefSeq" id="XP_054229281.1">
    <molecule id="Q9BY84-1"/>
    <property type="nucleotide sequence ID" value="XM_054373306.1"/>
</dbReference>
<dbReference type="PDB" id="2VSW">
    <property type="method" value="X-ray"/>
    <property type="resolution" value="2.20 A"/>
    <property type="chains" value="A/B=5-150"/>
</dbReference>
<dbReference type="PDB" id="3TG3">
    <property type="method" value="X-ray"/>
    <property type="resolution" value="2.68 A"/>
    <property type="chains" value="A/B/C/D=5-138"/>
</dbReference>
<dbReference type="PDB" id="4YR8">
    <property type="method" value="X-ray"/>
    <property type="resolution" value="2.40 A"/>
    <property type="chains" value="B/D/G/H=156-301"/>
</dbReference>
<dbReference type="PDBsum" id="2VSW"/>
<dbReference type="PDBsum" id="3TG3"/>
<dbReference type="PDBsum" id="4YR8"/>
<dbReference type="BMRB" id="Q9BY84"/>
<dbReference type="SMR" id="Q9BY84"/>
<dbReference type="BioGRID" id="123321">
    <property type="interactions" value="247"/>
</dbReference>
<dbReference type="FunCoup" id="Q9BY84">
    <property type="interactions" value="2446"/>
</dbReference>
<dbReference type="IntAct" id="Q9BY84">
    <property type="interactions" value="213"/>
</dbReference>
<dbReference type="MINT" id="Q9BY84"/>
<dbReference type="STRING" id="9606.ENSP00000298573"/>
<dbReference type="DEPOD" id="DUSP16"/>
<dbReference type="GlyGen" id="Q9BY84">
    <property type="glycosylation" value="4 sites, 2 N-linked glycans (2 sites), 1 O-linked glycan (1 site)"/>
</dbReference>
<dbReference type="iPTMnet" id="Q9BY84"/>
<dbReference type="PhosphoSitePlus" id="Q9BY84"/>
<dbReference type="BioMuta" id="DUSP16"/>
<dbReference type="DMDM" id="20137933"/>
<dbReference type="jPOST" id="Q9BY84"/>
<dbReference type="MassIVE" id="Q9BY84"/>
<dbReference type="PaxDb" id="9606-ENSP00000298573"/>
<dbReference type="PeptideAtlas" id="Q9BY84"/>
<dbReference type="ProteomicsDB" id="77894"/>
<dbReference type="ProteomicsDB" id="79602">
    <molecule id="Q9BY84-1"/>
</dbReference>
<dbReference type="Pumba" id="Q9BY84"/>
<dbReference type="Antibodypedia" id="11891">
    <property type="antibodies" value="218 antibodies from 33 providers"/>
</dbReference>
<dbReference type="DNASU" id="80824"/>
<dbReference type="Ensembl" id="ENST00000228862.3">
    <molecule id="Q9BY84-2"/>
    <property type="protein sequence ID" value="ENSP00000228862.3"/>
    <property type="gene ID" value="ENSG00000111266.9"/>
</dbReference>
<dbReference type="Ensembl" id="ENST00000298573.9">
    <molecule id="Q9BY84-1"/>
    <property type="protein sequence ID" value="ENSP00000298573.5"/>
    <property type="gene ID" value="ENSG00000111266.9"/>
</dbReference>
<dbReference type="Ensembl" id="ENST00000626413.3">
    <molecule id="Q9BY84-1"/>
    <property type="protein sequence ID" value="ENSP00000487512.1"/>
    <property type="gene ID" value="ENSG00000280962.3"/>
</dbReference>
<dbReference type="Ensembl" id="ENST00000628303.1">
    <molecule id="Q9BY84-2"/>
    <property type="protein sequence ID" value="ENSP00000487034.1"/>
    <property type="gene ID" value="ENSG00000280962.3"/>
</dbReference>
<dbReference type="GeneID" id="80824"/>
<dbReference type="KEGG" id="hsa:80824"/>
<dbReference type="MANE-Select" id="ENST00000298573.9">
    <property type="protein sequence ID" value="ENSP00000298573.5"/>
    <property type="RefSeq nucleotide sequence ID" value="NM_030640.3"/>
    <property type="RefSeq protein sequence ID" value="NP_085143.1"/>
</dbReference>
<dbReference type="UCSC" id="uc001rao.3">
    <molecule id="Q9BY84-1"/>
    <property type="organism name" value="human"/>
</dbReference>
<dbReference type="AGR" id="HGNC:17909"/>
<dbReference type="CTD" id="80824"/>
<dbReference type="DisGeNET" id="80824"/>
<dbReference type="GeneCards" id="DUSP16"/>
<dbReference type="HGNC" id="HGNC:17909">
    <property type="gene designation" value="DUSP16"/>
</dbReference>
<dbReference type="HPA" id="ENSG00000111266">
    <property type="expression patterns" value="Low tissue specificity"/>
</dbReference>
<dbReference type="MIM" id="607175">
    <property type="type" value="gene"/>
</dbReference>
<dbReference type="neXtProt" id="NX_Q9BY84"/>
<dbReference type="OpenTargets" id="ENSG00000111266"/>
<dbReference type="PharmGKB" id="PA38475"/>
<dbReference type="VEuPathDB" id="HostDB:ENSG00000111266"/>
<dbReference type="eggNOG" id="KOG1716">
    <property type="taxonomic scope" value="Eukaryota"/>
</dbReference>
<dbReference type="GeneTree" id="ENSGT00940000157164"/>
<dbReference type="HOGENOM" id="CLU_027074_16_0_1"/>
<dbReference type="InParanoid" id="Q9BY84"/>
<dbReference type="OMA" id="EGIMSEN"/>
<dbReference type="OrthoDB" id="165342at2759"/>
<dbReference type="PAN-GO" id="Q9BY84">
    <property type="GO annotations" value="6 GO annotations based on evolutionary models"/>
</dbReference>
<dbReference type="PhylomeDB" id="Q9BY84"/>
<dbReference type="TreeFam" id="TF105122"/>
<dbReference type="PathwayCommons" id="Q9BY84"/>
<dbReference type="Reactome" id="R-HSA-112409">
    <property type="pathway name" value="RAF-independent MAPK1/3 activation"/>
</dbReference>
<dbReference type="Reactome" id="R-HSA-5675221">
    <property type="pathway name" value="Negative regulation of MAPK pathway"/>
</dbReference>
<dbReference type="Reactome" id="R-HSA-9636569">
    <property type="pathway name" value="Suppression of autophagy"/>
</dbReference>
<dbReference type="Reactome" id="R-HSA-9652817">
    <property type="pathway name" value="Signaling by MAPK mutants"/>
</dbReference>
<dbReference type="SignaLink" id="Q9BY84"/>
<dbReference type="SIGNOR" id="Q9BY84"/>
<dbReference type="BioGRID-ORCS" id="80824">
    <property type="hits" value="12 hits in 1179 CRISPR screens"/>
</dbReference>
<dbReference type="ChiTaRS" id="DUSP16">
    <property type="organism name" value="human"/>
</dbReference>
<dbReference type="EvolutionaryTrace" id="Q9BY84"/>
<dbReference type="GeneWiki" id="DUSP16"/>
<dbReference type="GenomeRNAi" id="80824"/>
<dbReference type="Pharos" id="Q9BY84">
    <property type="development level" value="Tbio"/>
</dbReference>
<dbReference type="PRO" id="PR:Q9BY84"/>
<dbReference type="Proteomes" id="UP000005640">
    <property type="component" value="Chromosome 12"/>
</dbReference>
<dbReference type="RNAct" id="Q9BY84">
    <property type="molecule type" value="protein"/>
</dbReference>
<dbReference type="Bgee" id="ENSG00000111266">
    <property type="expression patterns" value="Expressed in adrenal tissue and 108 other cell types or tissues"/>
</dbReference>
<dbReference type="ExpressionAtlas" id="Q9BY84">
    <property type="expression patterns" value="baseline and differential"/>
</dbReference>
<dbReference type="GO" id="GO:0005737">
    <property type="term" value="C:cytoplasm"/>
    <property type="evidence" value="ECO:0000314"/>
    <property type="project" value="UniProtKB"/>
</dbReference>
<dbReference type="GO" id="GO:0031410">
    <property type="term" value="C:cytoplasmic vesicle"/>
    <property type="evidence" value="ECO:0007669"/>
    <property type="project" value="UniProtKB-KW"/>
</dbReference>
<dbReference type="GO" id="GO:0005829">
    <property type="term" value="C:cytosol"/>
    <property type="evidence" value="ECO:0000304"/>
    <property type="project" value="Reactome"/>
</dbReference>
<dbReference type="GO" id="GO:0005654">
    <property type="term" value="C:nucleoplasm"/>
    <property type="evidence" value="ECO:0000314"/>
    <property type="project" value="HPA"/>
</dbReference>
<dbReference type="GO" id="GO:0005634">
    <property type="term" value="C:nucleus"/>
    <property type="evidence" value="ECO:0000314"/>
    <property type="project" value="UniProtKB"/>
</dbReference>
<dbReference type="GO" id="GO:0008432">
    <property type="term" value="F:JUN kinase binding"/>
    <property type="evidence" value="ECO:0000353"/>
    <property type="project" value="UniProtKB"/>
</dbReference>
<dbReference type="GO" id="GO:0033550">
    <property type="term" value="F:MAP kinase tyrosine phosphatase activity"/>
    <property type="evidence" value="ECO:0000318"/>
    <property type="project" value="GO_Central"/>
</dbReference>
<dbReference type="GO" id="GO:0017017">
    <property type="term" value="F:MAP kinase tyrosine/serine/threonine phosphatase activity"/>
    <property type="evidence" value="ECO:0000318"/>
    <property type="project" value="GO_Central"/>
</dbReference>
<dbReference type="GO" id="GO:0051019">
    <property type="term" value="F:mitogen-activated protein kinase binding"/>
    <property type="evidence" value="ECO:0000353"/>
    <property type="project" value="UniProtKB"/>
</dbReference>
<dbReference type="GO" id="GO:0048273">
    <property type="term" value="F:mitogen-activated protein kinase p38 binding"/>
    <property type="evidence" value="ECO:0000314"/>
    <property type="project" value="UniProtKB"/>
</dbReference>
<dbReference type="GO" id="GO:0016791">
    <property type="term" value="F:phosphatase activity"/>
    <property type="evidence" value="ECO:0000314"/>
    <property type="project" value="UniProtKB"/>
</dbReference>
<dbReference type="GO" id="GO:0004721">
    <property type="term" value="F:phosphoprotein phosphatase activity"/>
    <property type="evidence" value="ECO:0000315"/>
    <property type="project" value="UniProtKB"/>
</dbReference>
<dbReference type="GO" id="GO:0140597">
    <property type="term" value="F:protein carrier chaperone"/>
    <property type="evidence" value="ECO:0000314"/>
    <property type="project" value="UniProtKB"/>
</dbReference>
<dbReference type="GO" id="GO:0004722">
    <property type="term" value="F:protein serine/threonine phosphatase activity"/>
    <property type="evidence" value="ECO:0007669"/>
    <property type="project" value="UniProtKB-EC"/>
</dbReference>
<dbReference type="GO" id="GO:0008330">
    <property type="term" value="F:protein tyrosine/threonine phosphatase activity"/>
    <property type="evidence" value="ECO:0000318"/>
    <property type="project" value="GO_Central"/>
</dbReference>
<dbReference type="GO" id="GO:0016311">
    <property type="term" value="P:dephosphorylation"/>
    <property type="evidence" value="ECO:0000314"/>
    <property type="project" value="UniProtKB"/>
</dbReference>
<dbReference type="GO" id="GO:0043409">
    <property type="term" value="P:negative regulation of MAPK cascade"/>
    <property type="evidence" value="ECO:0000314"/>
    <property type="project" value="MGI"/>
</dbReference>
<dbReference type="GO" id="GO:0007165">
    <property type="term" value="P:signal transduction"/>
    <property type="evidence" value="ECO:0000318"/>
    <property type="project" value="GO_Central"/>
</dbReference>
<dbReference type="CDD" id="cd14646">
    <property type="entry name" value="DSP_DUSP16"/>
    <property type="match status" value="1"/>
</dbReference>
<dbReference type="CDD" id="cd01446">
    <property type="entry name" value="DSP_MapKP"/>
    <property type="match status" value="1"/>
</dbReference>
<dbReference type="FunFam" id="3.40.250.10:FF:000016">
    <property type="entry name" value="Dual specificity phosphatase 16 (Predicted)"/>
    <property type="match status" value="1"/>
</dbReference>
<dbReference type="FunFam" id="3.90.190.10:FF:000050">
    <property type="entry name" value="Dual specificity phosphatase 16 (Predicted)"/>
    <property type="match status" value="1"/>
</dbReference>
<dbReference type="Gene3D" id="3.90.190.10">
    <property type="entry name" value="Protein tyrosine phosphatase superfamily"/>
    <property type="match status" value="1"/>
</dbReference>
<dbReference type="Gene3D" id="3.40.250.10">
    <property type="entry name" value="Rhodanese-like domain"/>
    <property type="match status" value="1"/>
</dbReference>
<dbReference type="InterPro" id="IPR000340">
    <property type="entry name" value="Dual-sp_phosphatase_cat-dom"/>
</dbReference>
<dbReference type="InterPro" id="IPR008343">
    <property type="entry name" value="MKP"/>
</dbReference>
<dbReference type="InterPro" id="IPR029021">
    <property type="entry name" value="Prot-tyrosine_phosphatase-like"/>
</dbReference>
<dbReference type="InterPro" id="IPR001763">
    <property type="entry name" value="Rhodanese-like_dom"/>
</dbReference>
<dbReference type="InterPro" id="IPR036873">
    <property type="entry name" value="Rhodanese-like_dom_sf"/>
</dbReference>
<dbReference type="InterPro" id="IPR016130">
    <property type="entry name" value="Tyr_Pase_AS"/>
</dbReference>
<dbReference type="InterPro" id="IPR000387">
    <property type="entry name" value="Tyr_Pase_dom"/>
</dbReference>
<dbReference type="InterPro" id="IPR020422">
    <property type="entry name" value="TYR_PHOSPHATASE_DUAL_dom"/>
</dbReference>
<dbReference type="PANTHER" id="PTHR10159">
    <property type="entry name" value="DUAL SPECIFICITY PROTEIN PHOSPHATASE"/>
    <property type="match status" value="1"/>
</dbReference>
<dbReference type="PANTHER" id="PTHR10159:SF343">
    <property type="entry name" value="DUAL SPECIFICITY PROTEIN PHOSPHATASE 16"/>
    <property type="match status" value="1"/>
</dbReference>
<dbReference type="Pfam" id="PF00782">
    <property type="entry name" value="DSPc"/>
    <property type="match status" value="1"/>
</dbReference>
<dbReference type="Pfam" id="PF00581">
    <property type="entry name" value="Rhodanese"/>
    <property type="match status" value="1"/>
</dbReference>
<dbReference type="PRINTS" id="PR01764">
    <property type="entry name" value="MAPKPHPHTASE"/>
</dbReference>
<dbReference type="SMART" id="SM00195">
    <property type="entry name" value="DSPc"/>
    <property type="match status" value="1"/>
</dbReference>
<dbReference type="SMART" id="SM00450">
    <property type="entry name" value="RHOD"/>
    <property type="match status" value="1"/>
</dbReference>
<dbReference type="SUPFAM" id="SSF52799">
    <property type="entry name" value="(Phosphotyrosine protein) phosphatases II"/>
    <property type="match status" value="1"/>
</dbReference>
<dbReference type="SUPFAM" id="SSF52821">
    <property type="entry name" value="Rhodanese/Cell cycle control phosphatase"/>
    <property type="match status" value="1"/>
</dbReference>
<dbReference type="PROSITE" id="PS50206">
    <property type="entry name" value="RHODANESE_3"/>
    <property type="match status" value="1"/>
</dbReference>
<dbReference type="PROSITE" id="PS00383">
    <property type="entry name" value="TYR_PHOSPHATASE_1"/>
    <property type="match status" value="1"/>
</dbReference>
<dbReference type="PROSITE" id="PS50056">
    <property type="entry name" value="TYR_PHOSPHATASE_2"/>
    <property type="match status" value="1"/>
</dbReference>
<dbReference type="PROSITE" id="PS50054">
    <property type="entry name" value="TYR_PHOSPHATASE_DUAL"/>
    <property type="match status" value="1"/>
</dbReference>
<protein>
    <recommendedName>
        <fullName>Dual specificity protein phosphatase 16</fullName>
        <ecNumber>3.1.3.16</ecNumber>
        <ecNumber>3.1.3.48</ecNumber>
    </recommendedName>
    <alternativeName>
        <fullName>Mitogen-activated protein kinase phosphatase 7</fullName>
        <shortName>MAP kinase phosphatase 7</shortName>
        <shortName>MKP-7</shortName>
    </alternativeName>
</protein>
<keyword id="KW-0002">3D-structure</keyword>
<keyword id="KW-0007">Acetylation</keyword>
<keyword id="KW-0025">Alternative splicing</keyword>
<keyword id="KW-0963">Cytoplasm</keyword>
<keyword id="KW-0968">Cytoplasmic vesicle</keyword>
<keyword id="KW-0378">Hydrolase</keyword>
<keyword id="KW-0539">Nucleus</keyword>
<keyword id="KW-0597">Phosphoprotein</keyword>
<keyword id="KW-0904">Protein phosphatase</keyword>
<keyword id="KW-1267">Proteomics identification</keyword>
<keyword id="KW-1185">Reference proteome</keyword>
<evidence type="ECO:0000255" key="1">
    <source>
        <dbReference type="PROSITE-ProRule" id="PRU00160"/>
    </source>
</evidence>
<evidence type="ECO:0000255" key="2">
    <source>
        <dbReference type="PROSITE-ProRule" id="PRU00173"/>
    </source>
</evidence>
<evidence type="ECO:0000255" key="3">
    <source>
        <dbReference type="PROSITE-ProRule" id="PRU10044"/>
    </source>
</evidence>
<evidence type="ECO:0000256" key="4">
    <source>
        <dbReference type="SAM" id="MobiDB-lite"/>
    </source>
</evidence>
<evidence type="ECO:0000269" key="5">
    <source>
    </source>
</evidence>
<evidence type="ECO:0000269" key="6">
    <source>
    </source>
</evidence>
<evidence type="ECO:0000269" key="7">
    <source>
    </source>
</evidence>
<evidence type="ECO:0000269" key="8">
    <source>
    </source>
</evidence>
<evidence type="ECO:0000303" key="9">
    <source ref="3"/>
</evidence>
<evidence type="ECO:0000305" key="10"/>
<evidence type="ECO:0007744" key="11">
    <source>
    </source>
</evidence>
<evidence type="ECO:0007829" key="12">
    <source>
        <dbReference type="PDB" id="2VSW"/>
    </source>
</evidence>
<evidence type="ECO:0007829" key="13">
    <source>
        <dbReference type="PDB" id="3TG3"/>
    </source>
</evidence>
<evidence type="ECO:0007829" key="14">
    <source>
        <dbReference type="PDB" id="4YR8"/>
    </source>
</evidence>
<name>DUS16_HUMAN</name>